<evidence type="ECO:0000250" key="1"/>
<evidence type="ECO:0000250" key="2">
    <source>
        <dbReference type="UniProtKB" id="Q53705"/>
    </source>
</evidence>
<evidence type="ECO:0000255" key="3"/>
<organism>
    <name type="scientific">Staphylococcus aureus (strain MW2)</name>
    <dbReference type="NCBI Taxonomy" id="196620"/>
    <lineage>
        <taxon>Bacteria</taxon>
        <taxon>Bacillati</taxon>
        <taxon>Bacillota</taxon>
        <taxon>Bacilli</taxon>
        <taxon>Bacillales</taxon>
        <taxon>Staphylococcaceae</taxon>
        <taxon>Staphylococcus</taxon>
    </lineage>
</organism>
<gene>
    <name type="primary">lytS</name>
    <name type="ordered locus">MW0236</name>
</gene>
<dbReference type="EC" id="2.7.13.3" evidence="2"/>
<dbReference type="EC" id="3.1.3.-" evidence="2"/>
<dbReference type="EMBL" id="BA000033">
    <property type="protein sequence ID" value="BAB94101.1"/>
    <property type="molecule type" value="Genomic_DNA"/>
</dbReference>
<dbReference type="RefSeq" id="WP_000950281.1">
    <property type="nucleotide sequence ID" value="NC_003923.1"/>
</dbReference>
<dbReference type="SMR" id="P60614"/>
<dbReference type="KEGG" id="sam:MW0236"/>
<dbReference type="HOGENOM" id="CLU_020473_3_3_9"/>
<dbReference type="GO" id="GO:0005886">
    <property type="term" value="C:plasma membrane"/>
    <property type="evidence" value="ECO:0007669"/>
    <property type="project" value="UniProtKB-SubCell"/>
</dbReference>
<dbReference type="GO" id="GO:0005524">
    <property type="term" value="F:ATP binding"/>
    <property type="evidence" value="ECO:0007669"/>
    <property type="project" value="UniProtKB-KW"/>
</dbReference>
<dbReference type="GO" id="GO:0016787">
    <property type="term" value="F:hydrolase activity"/>
    <property type="evidence" value="ECO:0007669"/>
    <property type="project" value="UniProtKB-KW"/>
</dbReference>
<dbReference type="GO" id="GO:0000155">
    <property type="term" value="F:phosphorelay sensor kinase activity"/>
    <property type="evidence" value="ECO:0007669"/>
    <property type="project" value="InterPro"/>
</dbReference>
<dbReference type="GO" id="GO:0071555">
    <property type="term" value="P:cell wall organization"/>
    <property type="evidence" value="ECO:0007669"/>
    <property type="project" value="InterPro"/>
</dbReference>
<dbReference type="CDD" id="cd16957">
    <property type="entry name" value="HATPase_LytS-like"/>
    <property type="match status" value="1"/>
</dbReference>
<dbReference type="Gene3D" id="1.10.1760.20">
    <property type="match status" value="1"/>
</dbReference>
<dbReference type="Gene3D" id="3.30.450.40">
    <property type="match status" value="1"/>
</dbReference>
<dbReference type="Gene3D" id="3.30.565.10">
    <property type="entry name" value="Histidine kinase-like ATPase, C-terminal domain"/>
    <property type="match status" value="1"/>
</dbReference>
<dbReference type="InterPro" id="IPR050640">
    <property type="entry name" value="Bact_2-comp_sensor_kinase"/>
</dbReference>
<dbReference type="InterPro" id="IPR003018">
    <property type="entry name" value="GAF"/>
</dbReference>
<dbReference type="InterPro" id="IPR029016">
    <property type="entry name" value="GAF-like_dom_sf"/>
</dbReference>
<dbReference type="InterPro" id="IPR036890">
    <property type="entry name" value="HATPase_C_sf"/>
</dbReference>
<dbReference type="InterPro" id="IPR010559">
    <property type="entry name" value="Sig_transdc_His_kin_internal"/>
</dbReference>
<dbReference type="InterPro" id="IPR011620">
    <property type="entry name" value="Sig_transdc_His_kinase_LytS_TM"/>
</dbReference>
<dbReference type="PANTHER" id="PTHR34220">
    <property type="entry name" value="SENSOR HISTIDINE KINASE YPDA"/>
    <property type="match status" value="1"/>
</dbReference>
<dbReference type="PANTHER" id="PTHR34220:SF7">
    <property type="entry name" value="SENSOR HISTIDINE KINASE YPDA"/>
    <property type="match status" value="1"/>
</dbReference>
<dbReference type="Pfam" id="PF07694">
    <property type="entry name" value="5TM-5TMR_LYT"/>
    <property type="match status" value="1"/>
</dbReference>
<dbReference type="Pfam" id="PF02518">
    <property type="entry name" value="HATPase_c"/>
    <property type="match status" value="1"/>
</dbReference>
<dbReference type="Pfam" id="PF06580">
    <property type="entry name" value="His_kinase"/>
    <property type="match status" value="1"/>
</dbReference>
<dbReference type="SMART" id="SM00065">
    <property type="entry name" value="GAF"/>
    <property type="match status" value="1"/>
</dbReference>
<dbReference type="SMART" id="SM00387">
    <property type="entry name" value="HATPase_c"/>
    <property type="match status" value="1"/>
</dbReference>
<dbReference type="SUPFAM" id="SSF55874">
    <property type="entry name" value="ATPase domain of HSP90 chaperone/DNA topoisomerase II/histidine kinase"/>
    <property type="match status" value="1"/>
</dbReference>
<dbReference type="SUPFAM" id="SSF55781">
    <property type="entry name" value="GAF domain-like"/>
    <property type="match status" value="1"/>
</dbReference>
<feature type="chain" id="PRO_0000074798" description="Sensor histidine kinase/phosphatase LytS">
    <location>
        <begin position="1"/>
        <end position="584"/>
    </location>
</feature>
<feature type="transmembrane region" description="Helical" evidence="3">
    <location>
        <begin position="6"/>
        <end position="28"/>
    </location>
</feature>
<feature type="transmembrane region" description="Helical" evidence="3">
    <location>
        <begin position="40"/>
        <end position="62"/>
    </location>
</feature>
<feature type="transmembrane region" description="Helical" evidence="3">
    <location>
        <begin position="88"/>
        <end position="110"/>
    </location>
</feature>
<feature type="transmembrane region" description="Helical" evidence="3">
    <location>
        <begin position="123"/>
        <end position="140"/>
    </location>
</feature>
<feature type="transmembrane region" description="Helical" evidence="3">
    <location>
        <begin position="155"/>
        <end position="172"/>
    </location>
</feature>
<feature type="transmembrane region" description="Helical" evidence="3">
    <location>
        <begin position="184"/>
        <end position="206"/>
    </location>
</feature>
<feature type="domain" description="GAF">
    <location>
        <begin position="311"/>
        <end position="362"/>
    </location>
</feature>
<feature type="domain" description="Histidine kinase">
    <location>
        <begin position="363"/>
        <end position="580"/>
    </location>
</feature>
<feature type="modified residue" description="Phosphohistidine; by autocatalysis" evidence="1">
    <location>
        <position position="390"/>
    </location>
</feature>
<accession>P60614</accession>
<accession>Q99WW3</accession>
<reference key="1">
    <citation type="journal article" date="2002" name="Lancet">
        <title>Genome and virulence determinants of high virulence community-acquired MRSA.</title>
        <authorList>
            <person name="Baba T."/>
            <person name="Takeuchi F."/>
            <person name="Kuroda M."/>
            <person name="Yuzawa H."/>
            <person name="Aoki K."/>
            <person name="Oguchi A."/>
            <person name="Nagai Y."/>
            <person name="Iwama N."/>
            <person name="Asano K."/>
            <person name="Naimi T."/>
            <person name="Kuroda H."/>
            <person name="Cui L."/>
            <person name="Yamamoto K."/>
            <person name="Hiramatsu K."/>
        </authorList>
    </citation>
    <scope>NUCLEOTIDE SEQUENCE [LARGE SCALE GENOMIC DNA]</scope>
    <source>
        <strain>MW2</strain>
    </source>
</reference>
<sequence>MLSLTMLLLERVGLIIILAYVLMNIPYFKNLMNRRRTWKARWQLCIIFSLFALMSNLTGIVIDHQHSLSGSVYFRLDDDVSLANTRVLTIGVAGLVGGPFVGLFVGVISGIFRVYMGGADAQVYLISSIFIGIIAGYFGLQAQRRKRYPSIAKSAMIGIVMEMIQMLSILTFSHDKAYAVDLISLIALPMIIVNSVGTAIFMSIIISTLKQEEQMKAVQTHDVLQLMNQTLPYFKEGLNRESAQQIAMIIKNLMKVSAVAITSKNEILSHVGAGSDHHIPTNEILTSLSKDVLKSGKLKEVHTKEEIGCSHPNCPLRAAIVIPLEMHGSIVGTLKMYFTNPNDLTFVERQLAEGLANIFSSQIELGEAETQSKLLKDAEIKSLQAQVSPHFFFNSINTISALVRINSEKARELLLELSYFFRANLQGSKQHTITLDKELSQVRAYLSLEQARYPGRFNININVEDKYRDVLVPPFLIQILVENAIKHAFTNRKQGNDIDVSVIKETATHVRIIVQDNGQGISKDKMHLLGETSVESESGTGSALENLNLRLKGLFGKSAALQFESTSSGTTFWCVLPYERQEEE</sequence>
<keyword id="KW-0067">ATP-binding</keyword>
<keyword id="KW-1003">Cell membrane</keyword>
<keyword id="KW-0378">Hydrolase</keyword>
<keyword id="KW-0418">Kinase</keyword>
<keyword id="KW-0472">Membrane</keyword>
<keyword id="KW-0547">Nucleotide-binding</keyword>
<keyword id="KW-0597">Phosphoprotein</keyword>
<keyword id="KW-0808">Transferase</keyword>
<keyword id="KW-0812">Transmembrane</keyword>
<keyword id="KW-1133">Transmembrane helix</keyword>
<keyword id="KW-0902">Two-component regulatory system</keyword>
<proteinExistence type="inferred from homology"/>
<protein>
    <recommendedName>
        <fullName>Sensor histidine kinase/phosphatase LytS</fullName>
        <ecNumber evidence="2">2.7.13.3</ecNumber>
        <ecNumber evidence="2">3.1.3.-</ecNumber>
    </recommendedName>
    <alternativeName>
        <fullName>Autolysin sensor kinase</fullName>
    </alternativeName>
</protein>
<comment type="function">
    <text evidence="2">Member of the two-component regulatory system LytR/LytS that regulates genes involved in autolysis, programmed cell death, biofilm formation and cell wall metabolism. Also participates in sensing and responding to host defense cationic antimicrobial peptides (HDPs). Functions as a sensor protein kinase which is autophosphorylated at a histidine residue and transfers its phosphate group to the conserved aspartic acid residue in the regulatory domain of LytR. In turn, LytR binds to the upstream promoter regions of target genes including lrgA and lrgB, to positively regulate their expression. Also possesses a phosphatase activity that dephosphorylates and thus inactivates LytR.</text>
</comment>
<comment type="catalytic activity">
    <reaction evidence="2">
        <text>ATP + protein L-histidine = ADP + protein N-phospho-L-histidine.</text>
        <dbReference type="EC" id="2.7.13.3"/>
    </reaction>
</comment>
<comment type="subcellular location">
    <subcellularLocation>
        <location evidence="1">Cell membrane</location>
        <topology evidence="1">Multi-pass membrane protein</topology>
    </subcellularLocation>
</comment>
<comment type="PTM">
    <text evidence="2">Autophosphorylated on His-390.</text>
</comment>
<name>LYTS_STAAW</name>